<gene>
    <name type="primary">CDC42</name>
    <name type="ORF">CAWG_00581</name>
</gene>
<evidence type="ECO:0000250" key="1"/>
<evidence type="ECO:0000305" key="2"/>
<protein>
    <recommendedName>
        <fullName>Cell division control protein 42 homolog</fullName>
    </recommendedName>
</protein>
<keyword id="KW-0131">Cell cycle</keyword>
<keyword id="KW-0132">Cell division</keyword>
<keyword id="KW-1003">Cell membrane</keyword>
<keyword id="KW-0342">GTP-binding</keyword>
<keyword id="KW-0449">Lipoprotein</keyword>
<keyword id="KW-0472">Membrane</keyword>
<keyword id="KW-0488">Methylation</keyword>
<keyword id="KW-0547">Nucleotide-binding</keyword>
<keyword id="KW-0636">Prenylation</keyword>
<keyword id="KW-0843">Virulence</keyword>
<sequence length="191" mass="21263">MQTIKCVVVGDGAVGKTCLLISYTTSKFPADYVPTVFDNYAVTVMIGDEPFTLGLFDTAGQEDYDRLRPLSYPSTDVFLVCFSVISPASFENVKEKWFPEVHHHCPGVPIIIVGTQTDLRNDDVILQRLHRQKLSPITQEQGEKLAKELRAVKYVECSALTQRGLKTVFDEAIVAALEPPVIKKSKKCTIL</sequence>
<proteinExistence type="inferred from homology"/>
<feature type="chain" id="PRO_0000413062" description="Cell division control protein 42 homolog">
    <location>
        <begin position="1"/>
        <end position="188"/>
    </location>
</feature>
<feature type="propeptide" id="PRO_0000413063" description="Removed in mature form" evidence="1">
    <location>
        <begin position="189"/>
        <end position="191"/>
    </location>
</feature>
<feature type="short sequence motif" description="Effector region" evidence="1">
    <location>
        <begin position="32"/>
        <end position="40"/>
    </location>
</feature>
<feature type="binding site" evidence="1">
    <location>
        <begin position="10"/>
        <end position="17"/>
    </location>
    <ligand>
        <name>GTP</name>
        <dbReference type="ChEBI" id="CHEBI:37565"/>
    </ligand>
</feature>
<feature type="binding site" evidence="1">
    <location>
        <begin position="57"/>
        <end position="61"/>
    </location>
    <ligand>
        <name>GTP</name>
        <dbReference type="ChEBI" id="CHEBI:37565"/>
    </ligand>
</feature>
<feature type="binding site" evidence="1">
    <location>
        <begin position="115"/>
        <end position="118"/>
    </location>
    <ligand>
        <name>GTP</name>
        <dbReference type="ChEBI" id="CHEBI:37565"/>
    </ligand>
</feature>
<feature type="modified residue" description="Cysteine methyl ester" evidence="1">
    <location>
        <position position="188"/>
    </location>
</feature>
<feature type="lipid moiety-binding region" description="S-geranylgeranyl cysteine" evidence="1">
    <location>
        <position position="188"/>
    </location>
</feature>
<reference key="1">
    <citation type="submission" date="1997-01" db="EMBL/GenBank/DDBJ databases">
        <authorList>
            <person name="Leberer E."/>
            <person name="Dignard D."/>
            <person name="Harcus D."/>
            <person name="Thomas D.Y."/>
        </authorList>
    </citation>
    <scope>NUCLEOTIDE SEQUENCE [GENOMIC DNA]</scope>
    <source>
        <strain>WO-1</strain>
    </source>
</reference>
<reference key="2">
    <citation type="journal article" date="2009" name="Nature">
        <title>Evolution of pathogenicity and sexual reproduction in eight Candida genomes.</title>
        <authorList>
            <person name="Butler G."/>
            <person name="Rasmussen M.D."/>
            <person name="Lin M.F."/>
            <person name="Santos M.A.S."/>
            <person name="Sakthikumar S."/>
            <person name="Munro C.A."/>
            <person name="Rheinbay E."/>
            <person name="Grabherr M."/>
            <person name="Forche A."/>
            <person name="Reedy J.L."/>
            <person name="Agrafioti I."/>
            <person name="Arnaud M.B."/>
            <person name="Bates S."/>
            <person name="Brown A.J.P."/>
            <person name="Brunke S."/>
            <person name="Costanzo M.C."/>
            <person name="Fitzpatrick D.A."/>
            <person name="de Groot P.W.J."/>
            <person name="Harris D."/>
            <person name="Hoyer L.L."/>
            <person name="Hube B."/>
            <person name="Klis F.M."/>
            <person name="Kodira C."/>
            <person name="Lennard N."/>
            <person name="Logue M.E."/>
            <person name="Martin R."/>
            <person name="Neiman A.M."/>
            <person name="Nikolaou E."/>
            <person name="Quail M.A."/>
            <person name="Quinn J."/>
            <person name="Santos M.C."/>
            <person name="Schmitzberger F.F."/>
            <person name="Sherlock G."/>
            <person name="Shah P."/>
            <person name="Silverstein K.A.T."/>
            <person name="Skrzypek M.S."/>
            <person name="Soll D."/>
            <person name="Staggs R."/>
            <person name="Stansfield I."/>
            <person name="Stumpf M.P.H."/>
            <person name="Sudbery P.E."/>
            <person name="Srikantha T."/>
            <person name="Zeng Q."/>
            <person name="Berman J."/>
            <person name="Berriman M."/>
            <person name="Heitman J."/>
            <person name="Gow N.A.R."/>
            <person name="Lorenz M.C."/>
            <person name="Birren B.W."/>
            <person name="Kellis M."/>
            <person name="Cuomo C.A."/>
        </authorList>
    </citation>
    <scope>NUCLEOTIDE SEQUENCE [LARGE SCALE GENOMIC DNA]</scope>
    <source>
        <strain>WO-1</strain>
    </source>
</reference>
<dbReference type="EMBL" id="U87970">
    <property type="protein sequence ID" value="AAB69764.1"/>
    <property type="molecule type" value="Genomic_DNA"/>
</dbReference>
<dbReference type="EMBL" id="CH672346">
    <property type="protein sequence ID" value="EEQ42372.1"/>
    <property type="molecule type" value="Genomic_DNA"/>
</dbReference>
<dbReference type="BMRB" id="C4YDI6"/>
<dbReference type="SMR" id="C4YDI6"/>
<dbReference type="PaxDb" id="5476-C4YDI6"/>
<dbReference type="VEuPathDB" id="FungiDB:CAWG_00581"/>
<dbReference type="HOGENOM" id="CLU_041217_21_3_1"/>
<dbReference type="OMA" id="PRHKDVT"/>
<dbReference type="OrthoDB" id="214at766764"/>
<dbReference type="PHI-base" id="PHI:471"/>
<dbReference type="Proteomes" id="UP000001429">
    <property type="component" value="Chromosome 1, Supercontig 1.1"/>
</dbReference>
<dbReference type="GO" id="GO:0005737">
    <property type="term" value="C:cytoplasm"/>
    <property type="evidence" value="ECO:0007669"/>
    <property type="project" value="UniProtKB-ARBA"/>
</dbReference>
<dbReference type="GO" id="GO:0005886">
    <property type="term" value="C:plasma membrane"/>
    <property type="evidence" value="ECO:0007669"/>
    <property type="project" value="UniProtKB-SubCell"/>
</dbReference>
<dbReference type="GO" id="GO:0005525">
    <property type="term" value="F:GTP binding"/>
    <property type="evidence" value="ECO:0007669"/>
    <property type="project" value="UniProtKB-KW"/>
</dbReference>
<dbReference type="GO" id="GO:0003924">
    <property type="term" value="F:GTPase activity"/>
    <property type="evidence" value="ECO:0007669"/>
    <property type="project" value="InterPro"/>
</dbReference>
<dbReference type="GO" id="GO:0051301">
    <property type="term" value="P:cell division"/>
    <property type="evidence" value="ECO:0007669"/>
    <property type="project" value="UniProtKB-KW"/>
</dbReference>
<dbReference type="GO" id="GO:0051128">
    <property type="term" value="P:regulation of cellular component organization"/>
    <property type="evidence" value="ECO:0007669"/>
    <property type="project" value="UniProtKB-ARBA"/>
</dbReference>
<dbReference type="GO" id="GO:0007264">
    <property type="term" value="P:small GTPase-mediated signal transduction"/>
    <property type="evidence" value="ECO:0007669"/>
    <property type="project" value="InterPro"/>
</dbReference>
<dbReference type="CDD" id="cd01874">
    <property type="entry name" value="Cdc42"/>
    <property type="match status" value="1"/>
</dbReference>
<dbReference type="FunFam" id="3.40.50.300:FF:000236">
    <property type="entry name" value="Cell division control protein 42"/>
    <property type="match status" value="1"/>
</dbReference>
<dbReference type="Gene3D" id="3.40.50.300">
    <property type="entry name" value="P-loop containing nucleotide triphosphate hydrolases"/>
    <property type="match status" value="1"/>
</dbReference>
<dbReference type="InterPro" id="IPR037874">
    <property type="entry name" value="Cdc42"/>
</dbReference>
<dbReference type="InterPro" id="IPR027417">
    <property type="entry name" value="P-loop_NTPase"/>
</dbReference>
<dbReference type="InterPro" id="IPR005225">
    <property type="entry name" value="Small_GTP-bd"/>
</dbReference>
<dbReference type="InterPro" id="IPR001806">
    <property type="entry name" value="Small_GTPase"/>
</dbReference>
<dbReference type="InterPro" id="IPR003578">
    <property type="entry name" value="Small_GTPase_Rho"/>
</dbReference>
<dbReference type="NCBIfam" id="TIGR00231">
    <property type="entry name" value="small_GTP"/>
    <property type="match status" value="1"/>
</dbReference>
<dbReference type="PANTHER" id="PTHR24072">
    <property type="entry name" value="RHO FAMILY GTPASE"/>
    <property type="match status" value="1"/>
</dbReference>
<dbReference type="Pfam" id="PF00071">
    <property type="entry name" value="Ras"/>
    <property type="match status" value="1"/>
</dbReference>
<dbReference type="PRINTS" id="PR00449">
    <property type="entry name" value="RASTRNSFRMNG"/>
</dbReference>
<dbReference type="SMART" id="SM00175">
    <property type="entry name" value="RAB"/>
    <property type="match status" value="1"/>
</dbReference>
<dbReference type="SMART" id="SM00176">
    <property type="entry name" value="RAN"/>
    <property type="match status" value="1"/>
</dbReference>
<dbReference type="SMART" id="SM00173">
    <property type="entry name" value="RAS"/>
    <property type="match status" value="1"/>
</dbReference>
<dbReference type="SMART" id="SM00174">
    <property type="entry name" value="RHO"/>
    <property type="match status" value="1"/>
</dbReference>
<dbReference type="SUPFAM" id="SSF52540">
    <property type="entry name" value="P-loop containing nucleoside triphosphate hydrolases"/>
    <property type="match status" value="1"/>
</dbReference>
<dbReference type="PROSITE" id="PS51420">
    <property type="entry name" value="RHO"/>
    <property type="match status" value="1"/>
</dbReference>
<comment type="function">
    <text>Involved in hyphal formation, virulence, morphogenesis.</text>
</comment>
<comment type="subcellular location">
    <subcellularLocation>
        <location evidence="2">Cell membrane</location>
        <topology evidence="2">Lipid-anchor</topology>
        <orientation evidence="2">Cytoplasmic side</orientation>
    </subcellularLocation>
</comment>
<comment type="similarity">
    <text evidence="2">Belongs to the small GTPase superfamily. Rho family. CDC42 subfamily.</text>
</comment>
<accession>C4YDI6</accession>
<accession>O14426</accession>
<accession>Q59QC8</accession>
<organism>
    <name type="scientific">Candida albicans (strain WO-1)</name>
    <name type="common">Yeast</name>
    <dbReference type="NCBI Taxonomy" id="294748"/>
    <lineage>
        <taxon>Eukaryota</taxon>
        <taxon>Fungi</taxon>
        <taxon>Dikarya</taxon>
        <taxon>Ascomycota</taxon>
        <taxon>Saccharomycotina</taxon>
        <taxon>Pichiomycetes</taxon>
        <taxon>Debaryomycetaceae</taxon>
        <taxon>Candida/Lodderomyces clade</taxon>
        <taxon>Candida</taxon>
    </lineage>
</organism>
<name>CDC42_CANAW</name>